<accession>Q3J8D5</accession>
<proteinExistence type="inferred from homology"/>
<feature type="chain" id="PRO_0000228555" description="Ribonuclease 3">
    <location>
        <begin position="1"/>
        <end position="233"/>
    </location>
</feature>
<feature type="domain" description="RNase III" evidence="1">
    <location>
        <begin position="5"/>
        <end position="127"/>
    </location>
</feature>
<feature type="domain" description="DRBM" evidence="1">
    <location>
        <begin position="156"/>
        <end position="226"/>
    </location>
</feature>
<feature type="active site" evidence="1">
    <location>
        <position position="44"/>
    </location>
</feature>
<feature type="active site" evidence="1">
    <location>
        <position position="116"/>
    </location>
</feature>
<feature type="binding site" evidence="1">
    <location>
        <position position="40"/>
    </location>
    <ligand>
        <name>Mg(2+)</name>
        <dbReference type="ChEBI" id="CHEBI:18420"/>
    </ligand>
</feature>
<feature type="binding site" evidence="1">
    <location>
        <position position="113"/>
    </location>
    <ligand>
        <name>Mg(2+)</name>
        <dbReference type="ChEBI" id="CHEBI:18420"/>
    </ligand>
</feature>
<feature type="binding site" evidence="1">
    <location>
        <position position="116"/>
    </location>
    <ligand>
        <name>Mg(2+)</name>
        <dbReference type="ChEBI" id="CHEBI:18420"/>
    </ligand>
</feature>
<evidence type="ECO:0000255" key="1">
    <source>
        <dbReference type="HAMAP-Rule" id="MF_00104"/>
    </source>
</evidence>
<protein>
    <recommendedName>
        <fullName evidence="1">Ribonuclease 3</fullName>
        <ecNumber evidence="1">3.1.26.3</ecNumber>
    </recommendedName>
    <alternativeName>
        <fullName evidence="1">Ribonuclease III</fullName>
        <shortName evidence="1">RNase III</shortName>
    </alternativeName>
</protein>
<comment type="function">
    <text evidence="1">Digests double-stranded RNA. Involved in the processing of primary rRNA transcript to yield the immediate precursors to the large and small rRNAs (23S and 16S). Processes some mRNAs, and tRNAs when they are encoded in the rRNA operon. Processes pre-crRNA and tracrRNA of type II CRISPR loci if present in the organism.</text>
</comment>
<comment type="catalytic activity">
    <reaction evidence="1">
        <text>Endonucleolytic cleavage to 5'-phosphomonoester.</text>
        <dbReference type="EC" id="3.1.26.3"/>
    </reaction>
</comment>
<comment type="cofactor">
    <cofactor evidence="1">
        <name>Mg(2+)</name>
        <dbReference type="ChEBI" id="CHEBI:18420"/>
    </cofactor>
</comment>
<comment type="subunit">
    <text evidence="1">Homodimer.</text>
</comment>
<comment type="subcellular location">
    <subcellularLocation>
        <location evidence="1">Cytoplasm</location>
    </subcellularLocation>
</comment>
<comment type="similarity">
    <text evidence="1">Belongs to the ribonuclease III family.</text>
</comment>
<sequence>MTDGLERLCRKLGYRFAEPALLRHAITHRSATKENNERLEFLGDSILNFLIADFLYSGFPRAQEGELSRLRATLVKGETLAELARELEIGDHLILGLGELKSGGYRRTSILADAFEAVIGAVYLDGGLEACRKLVSSLYRDRLETLTNEALLNLKDPKTRLQEYLQARQFPLPDYRVSAVSGEAHDQVFQVECTLNNTFPSVIGIGRSRRKAEQDAATRALALLLAENEDMNV</sequence>
<reference key="1">
    <citation type="journal article" date="2006" name="Appl. Environ. Microbiol.">
        <title>Complete genome sequence of the marine, chemolithoautotrophic, ammonia-oxidizing bacterium Nitrosococcus oceani ATCC 19707.</title>
        <authorList>
            <person name="Klotz M.G."/>
            <person name="Arp D.J."/>
            <person name="Chain P.S.G."/>
            <person name="El-Sheikh A.F."/>
            <person name="Hauser L.J."/>
            <person name="Hommes N.G."/>
            <person name="Larimer F.W."/>
            <person name="Malfatti S.A."/>
            <person name="Norton J.M."/>
            <person name="Poret-Peterson A.T."/>
            <person name="Vergez L.M."/>
            <person name="Ward B.B."/>
        </authorList>
    </citation>
    <scope>NUCLEOTIDE SEQUENCE [LARGE SCALE GENOMIC DNA]</scope>
    <source>
        <strain>ATCC 19707 / BCRC 17464 / JCM 30415 / NCIMB 11848 / C-107</strain>
    </source>
</reference>
<organism>
    <name type="scientific">Nitrosococcus oceani (strain ATCC 19707 / BCRC 17464 / JCM 30415 / NCIMB 11848 / C-107)</name>
    <dbReference type="NCBI Taxonomy" id="323261"/>
    <lineage>
        <taxon>Bacteria</taxon>
        <taxon>Pseudomonadati</taxon>
        <taxon>Pseudomonadota</taxon>
        <taxon>Gammaproteobacteria</taxon>
        <taxon>Chromatiales</taxon>
        <taxon>Chromatiaceae</taxon>
        <taxon>Nitrosococcus</taxon>
    </lineage>
</organism>
<dbReference type="EC" id="3.1.26.3" evidence="1"/>
<dbReference type="EMBL" id="CP000127">
    <property type="protein sequence ID" value="ABA58911.1"/>
    <property type="molecule type" value="Genomic_DNA"/>
</dbReference>
<dbReference type="RefSeq" id="WP_002810451.1">
    <property type="nucleotide sequence ID" value="NC_007484.1"/>
</dbReference>
<dbReference type="SMR" id="Q3J8D5"/>
<dbReference type="FunCoup" id="Q3J8D5">
    <property type="interactions" value="461"/>
</dbReference>
<dbReference type="STRING" id="323261.Noc_2458"/>
<dbReference type="KEGG" id="noc:Noc_2458"/>
<dbReference type="eggNOG" id="COG0571">
    <property type="taxonomic scope" value="Bacteria"/>
</dbReference>
<dbReference type="HOGENOM" id="CLU_000907_1_1_6"/>
<dbReference type="InParanoid" id="Q3J8D5"/>
<dbReference type="Proteomes" id="UP000006838">
    <property type="component" value="Chromosome"/>
</dbReference>
<dbReference type="GO" id="GO:0005737">
    <property type="term" value="C:cytoplasm"/>
    <property type="evidence" value="ECO:0007669"/>
    <property type="project" value="UniProtKB-SubCell"/>
</dbReference>
<dbReference type="GO" id="GO:0003725">
    <property type="term" value="F:double-stranded RNA binding"/>
    <property type="evidence" value="ECO:0007669"/>
    <property type="project" value="TreeGrafter"/>
</dbReference>
<dbReference type="GO" id="GO:0046872">
    <property type="term" value="F:metal ion binding"/>
    <property type="evidence" value="ECO:0007669"/>
    <property type="project" value="UniProtKB-KW"/>
</dbReference>
<dbReference type="GO" id="GO:0004525">
    <property type="term" value="F:ribonuclease III activity"/>
    <property type="evidence" value="ECO:0007669"/>
    <property type="project" value="UniProtKB-UniRule"/>
</dbReference>
<dbReference type="GO" id="GO:0019843">
    <property type="term" value="F:rRNA binding"/>
    <property type="evidence" value="ECO:0007669"/>
    <property type="project" value="UniProtKB-KW"/>
</dbReference>
<dbReference type="GO" id="GO:0006397">
    <property type="term" value="P:mRNA processing"/>
    <property type="evidence" value="ECO:0007669"/>
    <property type="project" value="UniProtKB-UniRule"/>
</dbReference>
<dbReference type="GO" id="GO:0010468">
    <property type="term" value="P:regulation of gene expression"/>
    <property type="evidence" value="ECO:0007669"/>
    <property type="project" value="TreeGrafter"/>
</dbReference>
<dbReference type="GO" id="GO:0006364">
    <property type="term" value="P:rRNA processing"/>
    <property type="evidence" value="ECO:0007669"/>
    <property type="project" value="UniProtKB-UniRule"/>
</dbReference>
<dbReference type="GO" id="GO:0008033">
    <property type="term" value="P:tRNA processing"/>
    <property type="evidence" value="ECO:0007669"/>
    <property type="project" value="UniProtKB-KW"/>
</dbReference>
<dbReference type="CDD" id="cd10845">
    <property type="entry name" value="DSRM_RNAse_III_family"/>
    <property type="match status" value="1"/>
</dbReference>
<dbReference type="CDD" id="cd00593">
    <property type="entry name" value="RIBOc"/>
    <property type="match status" value="1"/>
</dbReference>
<dbReference type="FunFam" id="1.10.1520.10:FF:000001">
    <property type="entry name" value="Ribonuclease 3"/>
    <property type="match status" value="1"/>
</dbReference>
<dbReference type="FunFam" id="3.30.160.20:FF:000003">
    <property type="entry name" value="Ribonuclease 3"/>
    <property type="match status" value="1"/>
</dbReference>
<dbReference type="Gene3D" id="3.30.160.20">
    <property type="match status" value="1"/>
</dbReference>
<dbReference type="Gene3D" id="1.10.1520.10">
    <property type="entry name" value="Ribonuclease III domain"/>
    <property type="match status" value="1"/>
</dbReference>
<dbReference type="HAMAP" id="MF_00104">
    <property type="entry name" value="RNase_III"/>
    <property type="match status" value="1"/>
</dbReference>
<dbReference type="InterPro" id="IPR014720">
    <property type="entry name" value="dsRBD_dom"/>
</dbReference>
<dbReference type="InterPro" id="IPR011907">
    <property type="entry name" value="RNase_III"/>
</dbReference>
<dbReference type="InterPro" id="IPR000999">
    <property type="entry name" value="RNase_III_dom"/>
</dbReference>
<dbReference type="InterPro" id="IPR036389">
    <property type="entry name" value="RNase_III_sf"/>
</dbReference>
<dbReference type="NCBIfam" id="TIGR02191">
    <property type="entry name" value="RNaseIII"/>
    <property type="match status" value="1"/>
</dbReference>
<dbReference type="PANTHER" id="PTHR11207:SF0">
    <property type="entry name" value="RIBONUCLEASE 3"/>
    <property type="match status" value="1"/>
</dbReference>
<dbReference type="PANTHER" id="PTHR11207">
    <property type="entry name" value="RIBONUCLEASE III"/>
    <property type="match status" value="1"/>
</dbReference>
<dbReference type="Pfam" id="PF00035">
    <property type="entry name" value="dsrm"/>
    <property type="match status" value="1"/>
</dbReference>
<dbReference type="Pfam" id="PF14622">
    <property type="entry name" value="Ribonucleas_3_3"/>
    <property type="match status" value="1"/>
</dbReference>
<dbReference type="SMART" id="SM00358">
    <property type="entry name" value="DSRM"/>
    <property type="match status" value="1"/>
</dbReference>
<dbReference type="SMART" id="SM00535">
    <property type="entry name" value="RIBOc"/>
    <property type="match status" value="1"/>
</dbReference>
<dbReference type="SUPFAM" id="SSF54768">
    <property type="entry name" value="dsRNA-binding domain-like"/>
    <property type="match status" value="1"/>
</dbReference>
<dbReference type="SUPFAM" id="SSF69065">
    <property type="entry name" value="RNase III domain-like"/>
    <property type="match status" value="1"/>
</dbReference>
<dbReference type="PROSITE" id="PS50137">
    <property type="entry name" value="DS_RBD"/>
    <property type="match status" value="1"/>
</dbReference>
<dbReference type="PROSITE" id="PS00517">
    <property type="entry name" value="RNASE_3_1"/>
    <property type="match status" value="1"/>
</dbReference>
<dbReference type="PROSITE" id="PS50142">
    <property type="entry name" value="RNASE_3_2"/>
    <property type="match status" value="1"/>
</dbReference>
<keyword id="KW-0963">Cytoplasm</keyword>
<keyword id="KW-0255">Endonuclease</keyword>
<keyword id="KW-0378">Hydrolase</keyword>
<keyword id="KW-0460">Magnesium</keyword>
<keyword id="KW-0479">Metal-binding</keyword>
<keyword id="KW-0507">mRNA processing</keyword>
<keyword id="KW-0540">Nuclease</keyword>
<keyword id="KW-1185">Reference proteome</keyword>
<keyword id="KW-0694">RNA-binding</keyword>
<keyword id="KW-0698">rRNA processing</keyword>
<keyword id="KW-0699">rRNA-binding</keyword>
<keyword id="KW-0819">tRNA processing</keyword>
<name>RNC_NITOC</name>
<gene>
    <name evidence="1" type="primary">rnc</name>
    <name type="ordered locus">Noc_2458</name>
</gene>